<accession>A6ZPV9</accession>
<sequence>MGKTKTRGRRHQDKQRKDEFEPSSNSAKEHIQQEESTYNDEAEIKETQPQMFFGVLDREELEYFKQAESTLQLDAFEAPEEKFQFVTSIIEEAKGKELKLVTSQITSKLMERVILECDETQLKDIFQSFNGVFFGLSCHKYASHVLETLFVRSAALVERELLTPSFDNNEKEGPYVTMENMFLFMLNELKPHLKTMMNHQYASHVLRLLILILSSKTLPNSTKANSTLRSKKSKIARKMIDIKDNDDFNKVYQTPESFKSELRDIITTLYKGFTNGAESRSDISQSTITKFREYSVDKVASPVIQLIIQVEGIFDRDRSFWRLVFNTADEKDPKEESFLEYLLSDPVGSHFLENVIGSARLKYVERLYRLYMKDRIVKLAKRDTTGAFVVRALLEHLKEKDVKQILDAVVPELSMLLNSNMDFGTAIINASNKQGGYLRDDVIAQLIQKYYPEKSDAKNILESCLLLSASTLGNTRDDWPTAEERRRSVFLEQLIDYDDKFLNITIDSMLALPEERLIQMCYHGVFSHVVEHVLQTTRVDIIKRKMLLNILSKESVNLACNVYGSHIMDKLWEFTAKLTLYKERIARALVLETEKVKNSIYGRQVWKNWKLELYVRKMWDWKKLIKEQEFEIFPNSKPLQPKPEKHSRERNNSKEGSAFKKQKHYR</sequence>
<keyword id="KW-0539">Nucleus</keyword>
<keyword id="KW-0677">Repeat</keyword>
<keyword id="KW-0690">Ribosome biogenesis</keyword>
<keyword id="KW-0698">rRNA processing</keyword>
<gene>
    <name type="primary">NOP9</name>
    <name type="ORF">SCY_2920</name>
</gene>
<organism>
    <name type="scientific">Saccharomyces cerevisiae (strain YJM789)</name>
    <name type="common">Baker's yeast</name>
    <dbReference type="NCBI Taxonomy" id="307796"/>
    <lineage>
        <taxon>Eukaryota</taxon>
        <taxon>Fungi</taxon>
        <taxon>Dikarya</taxon>
        <taxon>Ascomycota</taxon>
        <taxon>Saccharomycotina</taxon>
        <taxon>Saccharomycetes</taxon>
        <taxon>Saccharomycetales</taxon>
        <taxon>Saccharomycetaceae</taxon>
        <taxon>Saccharomyces</taxon>
    </lineage>
</organism>
<proteinExistence type="inferred from homology"/>
<protein>
    <recommendedName>
        <fullName>Nucleolar protein 9</fullName>
    </recommendedName>
    <alternativeName>
        <fullName>Pumilio domain-containing protein NOP9</fullName>
    </alternativeName>
</protein>
<feature type="chain" id="PRO_0000407840" description="Nucleolar protein 9">
    <location>
        <begin position="1"/>
        <end position="666"/>
    </location>
</feature>
<feature type="repeat" description="Pumilio 1">
    <location>
        <begin position="92"/>
        <end position="127"/>
    </location>
</feature>
<feature type="repeat" description="Pumilio 2">
    <location>
        <begin position="128"/>
        <end position="163"/>
    </location>
</feature>
<feature type="repeat" description="Pumilio 3">
    <location>
        <begin position="188"/>
        <end position="223"/>
    </location>
</feature>
<feature type="repeat" description="Pumilio 4">
    <location>
        <begin position="286"/>
        <end position="326"/>
    </location>
</feature>
<feature type="repeat" description="Pumilio 5">
    <location>
        <begin position="334"/>
        <end position="369"/>
    </location>
</feature>
<feature type="repeat" description="Pumilio 6">
    <location>
        <begin position="370"/>
        <end position="407"/>
    </location>
</feature>
<feature type="repeat" description="Pumilio 7">
    <location>
        <begin position="511"/>
        <end position="548"/>
    </location>
</feature>
<feature type="repeat" description="Pumilio 8">
    <location>
        <begin position="549"/>
        <end position="587"/>
    </location>
</feature>
<feature type="region of interest" description="Disordered" evidence="2">
    <location>
        <begin position="1"/>
        <end position="40"/>
    </location>
</feature>
<feature type="region of interest" description="Disordered" evidence="2">
    <location>
        <begin position="635"/>
        <end position="666"/>
    </location>
</feature>
<feature type="compositionally biased region" description="Basic residues" evidence="2">
    <location>
        <begin position="1"/>
        <end position="14"/>
    </location>
</feature>
<feature type="compositionally biased region" description="Basic and acidic residues" evidence="2">
    <location>
        <begin position="642"/>
        <end position="653"/>
    </location>
</feature>
<reference key="1">
    <citation type="journal article" date="2007" name="Proc. Natl. Acad. Sci. U.S.A.">
        <title>Genome sequencing and comparative analysis of Saccharomyces cerevisiae strain YJM789.</title>
        <authorList>
            <person name="Wei W."/>
            <person name="McCusker J.H."/>
            <person name="Hyman R.W."/>
            <person name="Jones T."/>
            <person name="Ning Y."/>
            <person name="Cao Z."/>
            <person name="Gu Z."/>
            <person name="Bruno D."/>
            <person name="Miranda M."/>
            <person name="Nguyen M."/>
            <person name="Wilhelmy J."/>
            <person name="Komp C."/>
            <person name="Tamse R."/>
            <person name="Wang X."/>
            <person name="Jia P."/>
            <person name="Luedi P."/>
            <person name="Oefner P.J."/>
            <person name="David L."/>
            <person name="Dietrich F.S."/>
            <person name="Li Y."/>
            <person name="Davis R.W."/>
            <person name="Steinmetz L.M."/>
        </authorList>
    </citation>
    <scope>NUCLEOTIDE SEQUENCE [LARGE SCALE GENOMIC DNA]</scope>
    <source>
        <strain>YJM789</strain>
    </source>
</reference>
<evidence type="ECO:0000250" key="1"/>
<evidence type="ECO:0000256" key="2">
    <source>
        <dbReference type="SAM" id="MobiDB-lite"/>
    </source>
</evidence>
<evidence type="ECO:0000305" key="3"/>
<comment type="function">
    <text evidence="1">RNA-binding nucleolar protein required for pre-rRNA processing. Component of the 90S pre-ribosome involved in production of 18S rRNA and assembly of small ribosomal subunit. Component of the pre-40S ribosome required for release from the nucleolus (By similarity).</text>
</comment>
<comment type="subunit">
    <text evidence="1">Component of the 90S pre-ribosome. Component of the pre-40S ribosome.</text>
</comment>
<comment type="subcellular location">
    <subcellularLocation>
        <location evidence="1">Nucleus</location>
        <location evidence="1">Nucleolus</location>
    </subcellularLocation>
</comment>
<comment type="similarity">
    <text evidence="3">Belongs to the NOP9 family.</text>
</comment>
<dbReference type="EMBL" id="AAFW02000040">
    <property type="protein sequence ID" value="EDN63319.1"/>
    <property type="molecule type" value="Genomic_DNA"/>
</dbReference>
<dbReference type="SMR" id="A6ZPV9"/>
<dbReference type="HOGENOM" id="CLU_008720_1_1_1"/>
<dbReference type="Proteomes" id="UP000007060">
    <property type="component" value="Unassembled WGS sequence"/>
</dbReference>
<dbReference type="GO" id="GO:0030686">
    <property type="term" value="C:90S preribosome"/>
    <property type="evidence" value="ECO:0007669"/>
    <property type="project" value="TreeGrafter"/>
</dbReference>
<dbReference type="GO" id="GO:0005730">
    <property type="term" value="C:nucleolus"/>
    <property type="evidence" value="ECO:0007669"/>
    <property type="project" value="UniProtKB-SubCell"/>
</dbReference>
<dbReference type="GO" id="GO:0030688">
    <property type="term" value="C:preribosome, small subunit precursor"/>
    <property type="evidence" value="ECO:0007669"/>
    <property type="project" value="TreeGrafter"/>
</dbReference>
<dbReference type="GO" id="GO:0003723">
    <property type="term" value="F:RNA binding"/>
    <property type="evidence" value="ECO:0007669"/>
    <property type="project" value="InterPro"/>
</dbReference>
<dbReference type="GO" id="GO:0000480">
    <property type="term" value="P:endonucleolytic cleavage in 5'-ETS of tricistronic rRNA transcript (SSU-rRNA, 5.8S rRNA, LSU-rRNA)"/>
    <property type="evidence" value="ECO:0007669"/>
    <property type="project" value="TreeGrafter"/>
</dbReference>
<dbReference type="GO" id="GO:0000447">
    <property type="term" value="P:endonucleolytic cleavage in ITS1 to separate SSU-rRNA from 5.8S rRNA and LSU-rRNA from tricistronic rRNA transcript (SSU-rRNA, 5.8S rRNA, LSU-rRNA)"/>
    <property type="evidence" value="ECO:0007669"/>
    <property type="project" value="TreeGrafter"/>
</dbReference>
<dbReference type="GO" id="GO:0000472">
    <property type="term" value="P:endonucleolytic cleavage to generate mature 5'-end of SSU-rRNA from (SSU-rRNA, 5.8S rRNA, LSU-rRNA)"/>
    <property type="evidence" value="ECO:0007669"/>
    <property type="project" value="TreeGrafter"/>
</dbReference>
<dbReference type="GO" id="GO:0000056">
    <property type="term" value="P:ribosomal small subunit export from nucleus"/>
    <property type="evidence" value="ECO:0007669"/>
    <property type="project" value="TreeGrafter"/>
</dbReference>
<dbReference type="FunFam" id="1.25.10.10:FF:000647">
    <property type="entry name" value="Nucleolar protein 9"/>
    <property type="match status" value="1"/>
</dbReference>
<dbReference type="FunFam" id="1.25.10.10:FF:000684">
    <property type="entry name" value="Nucleolar protein 9"/>
    <property type="match status" value="1"/>
</dbReference>
<dbReference type="Gene3D" id="1.25.10.10">
    <property type="entry name" value="Leucine-rich Repeat Variant"/>
    <property type="match status" value="3"/>
</dbReference>
<dbReference type="InterPro" id="IPR011989">
    <property type="entry name" value="ARM-like"/>
</dbReference>
<dbReference type="InterPro" id="IPR016024">
    <property type="entry name" value="ARM-type_fold"/>
</dbReference>
<dbReference type="InterPro" id="IPR040000">
    <property type="entry name" value="NOP9"/>
</dbReference>
<dbReference type="InterPro" id="IPR001313">
    <property type="entry name" value="Pumilio_RNA-bd_rpt"/>
</dbReference>
<dbReference type="PANTHER" id="PTHR13102">
    <property type="entry name" value="NUCLEOLAR PROTEIN 9"/>
    <property type="match status" value="1"/>
</dbReference>
<dbReference type="PANTHER" id="PTHR13102:SF0">
    <property type="entry name" value="NUCLEOLAR PROTEIN 9"/>
    <property type="match status" value="1"/>
</dbReference>
<dbReference type="Pfam" id="PF22493">
    <property type="entry name" value="PUF_NOP9"/>
    <property type="match status" value="1"/>
</dbReference>
<dbReference type="SMART" id="SM00025">
    <property type="entry name" value="Pumilio"/>
    <property type="match status" value="8"/>
</dbReference>
<dbReference type="SUPFAM" id="SSF48371">
    <property type="entry name" value="ARM repeat"/>
    <property type="match status" value="1"/>
</dbReference>
<name>NOP9_YEAS7</name>